<name>OGFR_HUMAN</name>
<accession>Q9NZT2</accession>
<accession>O96029</accession>
<accession>Q4VXW5</accession>
<accession>Q96CM2</accession>
<accession>Q9BQW1</accession>
<accession>Q9H4H0</accession>
<accession>Q9H7J5</accession>
<accession>Q9NZT3</accession>
<accession>Q9NZT4</accession>
<dbReference type="EMBL" id="AF172451">
    <property type="protein sequence ID" value="AAF64404.1"/>
    <property type="molecule type" value="mRNA"/>
</dbReference>
<dbReference type="EMBL" id="AF172452">
    <property type="protein sequence ID" value="AAF64405.1"/>
    <property type="molecule type" value="mRNA"/>
</dbReference>
<dbReference type="EMBL" id="AF172453">
    <property type="protein sequence ID" value="AAF64406.1"/>
    <property type="molecule type" value="mRNA"/>
</dbReference>
<dbReference type="EMBL" id="AF112980">
    <property type="protein sequence ID" value="AAD03745.1"/>
    <property type="status" value="ALT_FRAME"/>
    <property type="molecule type" value="Genomic_DNA"/>
</dbReference>
<dbReference type="EMBL" id="AF109134">
    <property type="protein sequence ID" value="AAD03737.1"/>
    <property type="status" value="ALT_FRAME"/>
    <property type="molecule type" value="mRNA"/>
</dbReference>
<dbReference type="EMBL" id="AL035669">
    <property type="status" value="NOT_ANNOTATED_CDS"/>
    <property type="molecule type" value="Genomic_DNA"/>
</dbReference>
<dbReference type="EMBL" id="BC014137">
    <property type="protein sequence ID" value="AAH14137.1"/>
    <property type="molecule type" value="mRNA"/>
</dbReference>
<dbReference type="EMBL" id="AK024485">
    <property type="protein sequence ID" value="BAB15775.1"/>
    <property type="molecule type" value="mRNA"/>
</dbReference>
<dbReference type="CCDS" id="CCDS13504.1">
    <molecule id="Q9NZT2-1"/>
</dbReference>
<dbReference type="RefSeq" id="NP_031372.2">
    <molecule id="Q9NZT2-1"/>
    <property type="nucleotide sequence ID" value="NM_007346.3"/>
</dbReference>
<dbReference type="BioGRID" id="116239">
    <property type="interactions" value="50"/>
</dbReference>
<dbReference type="FunCoup" id="Q9NZT2">
    <property type="interactions" value="51"/>
</dbReference>
<dbReference type="IntAct" id="Q9NZT2">
    <property type="interactions" value="8"/>
</dbReference>
<dbReference type="MINT" id="Q9NZT2"/>
<dbReference type="STRING" id="9606.ENSP00000290291"/>
<dbReference type="ChEMBL" id="CHEMBL4105797"/>
<dbReference type="GlyGen" id="Q9NZT2">
    <property type="glycosylation" value="3 sites, 1 O-linked glycan (1 site)"/>
</dbReference>
<dbReference type="iPTMnet" id="Q9NZT2"/>
<dbReference type="PhosphoSitePlus" id="Q9NZT2"/>
<dbReference type="SwissPalm" id="Q9NZT2"/>
<dbReference type="BioMuta" id="OGFR"/>
<dbReference type="DMDM" id="146331047"/>
<dbReference type="jPOST" id="Q9NZT2"/>
<dbReference type="MassIVE" id="Q9NZT2"/>
<dbReference type="PaxDb" id="9606-ENSP00000290291"/>
<dbReference type="PeptideAtlas" id="Q9NZT2"/>
<dbReference type="ProteomicsDB" id="83507">
    <molecule id="Q9NZT2-1"/>
</dbReference>
<dbReference type="ProteomicsDB" id="83508">
    <molecule id="Q9NZT2-2"/>
</dbReference>
<dbReference type="Pumba" id="Q9NZT2"/>
<dbReference type="Antibodypedia" id="14927">
    <property type="antibodies" value="170 antibodies from 29 providers"/>
</dbReference>
<dbReference type="DNASU" id="11054"/>
<dbReference type="Ensembl" id="ENST00000290291.10">
    <molecule id="Q9NZT2-1"/>
    <property type="protein sequence ID" value="ENSP00000290291.6"/>
    <property type="gene ID" value="ENSG00000060491.17"/>
</dbReference>
<dbReference type="GeneID" id="11054"/>
<dbReference type="KEGG" id="hsa:11054"/>
<dbReference type="MANE-Select" id="ENST00000290291.10">
    <property type="protein sequence ID" value="ENSP00000290291.6"/>
    <property type="RefSeq nucleotide sequence ID" value="NM_007346.4"/>
    <property type="RefSeq protein sequence ID" value="NP_031372.2"/>
</dbReference>
<dbReference type="UCSC" id="uc002ydj.4">
    <molecule id="Q9NZT2-1"/>
    <property type="organism name" value="human"/>
</dbReference>
<dbReference type="AGR" id="HGNC:15768"/>
<dbReference type="CTD" id="11054"/>
<dbReference type="DisGeNET" id="11054"/>
<dbReference type="GeneCards" id="OGFR"/>
<dbReference type="HGNC" id="HGNC:15768">
    <property type="gene designation" value="OGFR"/>
</dbReference>
<dbReference type="HPA" id="ENSG00000060491">
    <property type="expression patterns" value="Low tissue specificity"/>
</dbReference>
<dbReference type="MIM" id="606459">
    <property type="type" value="gene"/>
</dbReference>
<dbReference type="neXtProt" id="NX_Q9NZT2"/>
<dbReference type="OpenTargets" id="ENSG00000060491"/>
<dbReference type="PharmGKB" id="PA31911"/>
<dbReference type="VEuPathDB" id="HostDB:ENSG00000060491"/>
<dbReference type="eggNOG" id="ENOG502QVIF">
    <property type="taxonomic scope" value="Eukaryota"/>
</dbReference>
<dbReference type="GeneTree" id="ENSGT00390000018730"/>
<dbReference type="HOGENOM" id="CLU_025735_1_0_1"/>
<dbReference type="InParanoid" id="Q9NZT2"/>
<dbReference type="OMA" id="LHFAWEH"/>
<dbReference type="OrthoDB" id="9030204at2759"/>
<dbReference type="PAN-GO" id="Q9NZT2">
    <property type="GO annotations" value="0 GO annotations based on evolutionary models"/>
</dbReference>
<dbReference type="PhylomeDB" id="Q9NZT2"/>
<dbReference type="TreeFam" id="TF331377"/>
<dbReference type="PathwayCommons" id="Q9NZT2"/>
<dbReference type="SignaLink" id="Q9NZT2"/>
<dbReference type="BioGRID-ORCS" id="11054">
    <property type="hits" value="109 hits in 1166 CRISPR screens"/>
</dbReference>
<dbReference type="ChiTaRS" id="OGFR">
    <property type="organism name" value="human"/>
</dbReference>
<dbReference type="GeneWiki" id="OGFr"/>
<dbReference type="GenomeRNAi" id="11054"/>
<dbReference type="Pharos" id="Q9NZT2">
    <property type="development level" value="Tbio"/>
</dbReference>
<dbReference type="PRO" id="PR:Q9NZT2"/>
<dbReference type="Proteomes" id="UP000005640">
    <property type="component" value="Chromosome 20"/>
</dbReference>
<dbReference type="RNAct" id="Q9NZT2">
    <property type="molecule type" value="protein"/>
</dbReference>
<dbReference type="Bgee" id="ENSG00000060491">
    <property type="expression patterns" value="Expressed in granulocyte and 191 other cell types or tissues"/>
</dbReference>
<dbReference type="ExpressionAtlas" id="Q9NZT2">
    <property type="expression patterns" value="baseline and differential"/>
</dbReference>
<dbReference type="GO" id="GO:0005737">
    <property type="term" value="C:cytoplasm"/>
    <property type="evidence" value="ECO:0007669"/>
    <property type="project" value="UniProtKB-SubCell"/>
</dbReference>
<dbReference type="GO" id="GO:0016020">
    <property type="term" value="C:membrane"/>
    <property type="evidence" value="ECO:0007669"/>
    <property type="project" value="InterPro"/>
</dbReference>
<dbReference type="GO" id="GO:0005634">
    <property type="term" value="C:nucleus"/>
    <property type="evidence" value="ECO:0007669"/>
    <property type="project" value="UniProtKB-SubCell"/>
</dbReference>
<dbReference type="GO" id="GO:0140625">
    <property type="term" value="F:opioid growth factor receptor activity"/>
    <property type="evidence" value="ECO:0007669"/>
    <property type="project" value="InterPro"/>
</dbReference>
<dbReference type="GO" id="GO:0001558">
    <property type="term" value="P:regulation of cell growth"/>
    <property type="evidence" value="ECO:0000303"/>
    <property type="project" value="UniProtKB"/>
</dbReference>
<dbReference type="InterPro" id="IPR006757">
    <property type="entry name" value="OGF_rcpt"/>
</dbReference>
<dbReference type="InterPro" id="IPR006770">
    <property type="entry name" value="OGF_rcpt_rpt"/>
</dbReference>
<dbReference type="InterPro" id="IPR039574">
    <property type="entry name" value="OGFr"/>
</dbReference>
<dbReference type="PANTHER" id="PTHR14015:SF1">
    <property type="entry name" value="OPIOID GROWTH FACTOR RECEPTOR"/>
    <property type="match status" value="1"/>
</dbReference>
<dbReference type="PANTHER" id="PTHR14015">
    <property type="entry name" value="OPIOID GROWTH FACTOR RECEPTOR OGFR ZETA-TYPE OPIOID RECEPTOR"/>
    <property type="match status" value="1"/>
</dbReference>
<dbReference type="Pfam" id="PF04680">
    <property type="entry name" value="OGFr_III"/>
    <property type="match status" value="7"/>
</dbReference>
<dbReference type="Pfam" id="PF04664">
    <property type="entry name" value="OGFr_N"/>
    <property type="match status" value="1"/>
</dbReference>
<evidence type="ECO:0000250" key="1"/>
<evidence type="ECO:0000250" key="2">
    <source>
        <dbReference type="UniProtKB" id="Q99PG2"/>
    </source>
</evidence>
<evidence type="ECO:0000255" key="3"/>
<evidence type="ECO:0000256" key="4">
    <source>
        <dbReference type="SAM" id="MobiDB-lite"/>
    </source>
</evidence>
<evidence type="ECO:0000269" key="5">
    <source>
    </source>
</evidence>
<evidence type="ECO:0000269" key="6">
    <source>
    </source>
</evidence>
<evidence type="ECO:0000269" key="7">
    <source ref="2"/>
</evidence>
<evidence type="ECO:0000303" key="8">
    <source>
    </source>
</evidence>
<evidence type="ECO:0000303" key="9">
    <source>
    </source>
</evidence>
<evidence type="ECO:0000305" key="10"/>
<evidence type="ECO:0007744" key="11">
    <source>
    </source>
</evidence>
<evidence type="ECO:0007744" key="12">
    <source>
    </source>
</evidence>
<evidence type="ECO:0007744" key="13">
    <source>
    </source>
</evidence>
<evidence type="ECO:0007744" key="14">
    <source>
    </source>
</evidence>
<evidence type="ECO:0007744" key="15">
    <source>
    </source>
</evidence>
<evidence type="ECO:0007744" key="16">
    <source>
    </source>
</evidence>
<evidence type="ECO:0007744" key="17">
    <source>
    </source>
</evidence>
<evidence type="ECO:0007744" key="18">
    <source>
    </source>
</evidence>
<evidence type="ECO:0007744" key="19">
    <source>
    </source>
</evidence>
<evidence type="ECO:0007744" key="20">
    <source>
    </source>
</evidence>
<evidence type="ECO:0007744" key="21">
    <source>
    </source>
</evidence>
<comment type="function">
    <text>Receptor for opioid growth factor (OGF), also known as Met-enkephalin. Seems to be involved in growth regulation.</text>
</comment>
<comment type="interaction">
    <interactant intactId="EBI-1044212">
        <id>Q9NZT2</id>
    </interactant>
    <interactant intactId="EBI-750109">
        <id>Q9NYB0</id>
        <label>TERF2IP</label>
    </interactant>
    <organismsDiffer>false</organismsDiffer>
    <experiments>2</experiments>
</comment>
<comment type="subcellular location">
    <subcellularLocation>
        <location evidence="1">Cytoplasm</location>
    </subcellularLocation>
    <subcellularLocation>
        <location evidence="1">Nucleus</location>
    </subcellularLocation>
    <text>The OGF/OGFR complex is probably translocated to the nucleus.</text>
</comment>
<comment type="alternative products">
    <event type="alternative splicing"/>
    <isoform>
        <id>Q9NZT2-1</id>
        <name>1</name>
        <sequence type="displayed"/>
    </isoform>
    <isoform>
        <id>Q9NZT2-2</id>
        <name>2</name>
        <sequence type="described" ref="VSP_004060"/>
    </isoform>
</comment>
<comment type="tissue specificity">
    <text>Highly expressed in the heart and liver, moderately in skeletal muscle and kidney and to a lesser extent in brain and pancreas. Expressed in fetal tissues including liver and kidney.</text>
</comment>
<comment type="similarity">
    <text evidence="10">Belongs to the opioid growth factor receptor family.</text>
</comment>
<comment type="sequence caution" evidence="10">
    <conflict type="frameshift">
        <sequence resource="EMBL-CDS" id="AAD03737"/>
    </conflict>
</comment>
<comment type="sequence caution" evidence="10">
    <conflict type="frameshift">
        <sequence resource="EMBL-CDS" id="AAD03745"/>
    </conflict>
</comment>
<comment type="online information" name="Wikipedia">
    <link uri="https://en.wikipedia.org/wiki/OGFr"/>
    <text>OGFr entry</text>
</comment>
<protein>
    <recommendedName>
        <fullName>Opioid growth factor receptor</fullName>
        <shortName>OGFr</shortName>
    </recommendedName>
    <alternativeName>
        <fullName>Protein 7-60</fullName>
    </alternativeName>
    <alternativeName>
        <fullName>Zeta-type opioid receptor</fullName>
    </alternativeName>
</protein>
<reference key="1">
    <citation type="journal article" date="2000" name="Brain Res.">
        <title>Cloning, sequencing, chromosomal location, and function of cDNAs encoding an opioid growth factor receptor (OGFr) in humans.</title>
        <authorList>
            <person name="Zagon I.S."/>
            <person name="Verderame M.F."/>
            <person name="Allen S.S."/>
            <person name="McLaughlin P.J."/>
        </authorList>
    </citation>
    <scope>NUCLEOTIDE SEQUENCE [MRNA] (ISOFORMS 1 AND 2)</scope>
    <scope>VARIANT THR-577</scope>
    <source>
        <tissue>Placenta</tissue>
    </source>
</reference>
<reference key="2">
    <citation type="submission" date="1998-12" db="EMBL/GenBank/DDBJ databases">
        <title>Genomic structure of human gene 7-60.</title>
        <authorList>
            <person name="Takanosu M."/>
            <person name="Liu J."/>
            <person name="Mayne R."/>
            <person name="Wood B.M."/>
            <person name="Brewton R.G."/>
        </authorList>
    </citation>
    <scope>NUCLEOTIDE SEQUENCE [GENOMIC DNA / MRNA] (ISOFORM 1)</scope>
    <scope>VARIANT THR-577</scope>
</reference>
<reference key="3">
    <citation type="journal article" date="2001" name="Nature">
        <title>The DNA sequence and comparative analysis of human chromosome 20.</title>
        <authorList>
            <person name="Deloukas P."/>
            <person name="Matthews L.H."/>
            <person name="Ashurst J.L."/>
            <person name="Burton J."/>
            <person name="Gilbert J.G.R."/>
            <person name="Jones M."/>
            <person name="Stavrides G."/>
            <person name="Almeida J.P."/>
            <person name="Babbage A.K."/>
            <person name="Bagguley C.L."/>
            <person name="Bailey J."/>
            <person name="Barlow K.F."/>
            <person name="Bates K.N."/>
            <person name="Beard L.M."/>
            <person name="Beare D.M."/>
            <person name="Beasley O.P."/>
            <person name="Bird C.P."/>
            <person name="Blakey S.E."/>
            <person name="Bridgeman A.M."/>
            <person name="Brown A.J."/>
            <person name="Buck D."/>
            <person name="Burrill W.D."/>
            <person name="Butler A.P."/>
            <person name="Carder C."/>
            <person name="Carter N.P."/>
            <person name="Chapman J.C."/>
            <person name="Clamp M."/>
            <person name="Clark G."/>
            <person name="Clark L.N."/>
            <person name="Clark S.Y."/>
            <person name="Clee C.M."/>
            <person name="Clegg S."/>
            <person name="Cobley V.E."/>
            <person name="Collier R.E."/>
            <person name="Connor R.E."/>
            <person name="Corby N.R."/>
            <person name="Coulson A."/>
            <person name="Coville G.J."/>
            <person name="Deadman R."/>
            <person name="Dhami P.D."/>
            <person name="Dunn M."/>
            <person name="Ellington A.G."/>
            <person name="Frankland J.A."/>
            <person name="Fraser A."/>
            <person name="French L."/>
            <person name="Garner P."/>
            <person name="Grafham D.V."/>
            <person name="Griffiths C."/>
            <person name="Griffiths M.N.D."/>
            <person name="Gwilliam R."/>
            <person name="Hall R.E."/>
            <person name="Hammond S."/>
            <person name="Harley J.L."/>
            <person name="Heath P.D."/>
            <person name="Ho S."/>
            <person name="Holden J.L."/>
            <person name="Howden P.J."/>
            <person name="Huckle E."/>
            <person name="Hunt A.R."/>
            <person name="Hunt S.E."/>
            <person name="Jekosch K."/>
            <person name="Johnson C.M."/>
            <person name="Johnson D."/>
            <person name="Kay M.P."/>
            <person name="Kimberley A.M."/>
            <person name="King A."/>
            <person name="Knights A."/>
            <person name="Laird G.K."/>
            <person name="Lawlor S."/>
            <person name="Lehvaeslaiho M.H."/>
            <person name="Leversha M.A."/>
            <person name="Lloyd C."/>
            <person name="Lloyd D.M."/>
            <person name="Lovell J.D."/>
            <person name="Marsh V.L."/>
            <person name="Martin S.L."/>
            <person name="McConnachie L.J."/>
            <person name="McLay K."/>
            <person name="McMurray A.A."/>
            <person name="Milne S.A."/>
            <person name="Mistry D."/>
            <person name="Moore M.J.F."/>
            <person name="Mullikin J.C."/>
            <person name="Nickerson T."/>
            <person name="Oliver K."/>
            <person name="Parker A."/>
            <person name="Patel R."/>
            <person name="Pearce T.A.V."/>
            <person name="Peck A.I."/>
            <person name="Phillimore B.J.C.T."/>
            <person name="Prathalingam S.R."/>
            <person name="Plumb R.W."/>
            <person name="Ramsay H."/>
            <person name="Rice C.M."/>
            <person name="Ross M.T."/>
            <person name="Scott C.E."/>
            <person name="Sehra H.K."/>
            <person name="Shownkeen R."/>
            <person name="Sims S."/>
            <person name="Skuce C.D."/>
            <person name="Smith M.L."/>
            <person name="Soderlund C."/>
            <person name="Steward C.A."/>
            <person name="Sulston J.E."/>
            <person name="Swann R.M."/>
            <person name="Sycamore N."/>
            <person name="Taylor R."/>
            <person name="Tee L."/>
            <person name="Thomas D.W."/>
            <person name="Thorpe A."/>
            <person name="Tracey A."/>
            <person name="Tromans A.C."/>
            <person name="Vaudin M."/>
            <person name="Wall M."/>
            <person name="Wallis J.M."/>
            <person name="Whitehead S.L."/>
            <person name="Whittaker P."/>
            <person name="Willey D.L."/>
            <person name="Williams L."/>
            <person name="Williams S.A."/>
            <person name="Wilming L."/>
            <person name="Wray P.W."/>
            <person name="Hubbard T."/>
            <person name="Durbin R.M."/>
            <person name="Bentley D.R."/>
            <person name="Beck S."/>
            <person name="Rogers J."/>
        </authorList>
    </citation>
    <scope>NUCLEOTIDE SEQUENCE [LARGE SCALE GENOMIC DNA]</scope>
</reference>
<reference key="4">
    <citation type="journal article" date="2004" name="Genome Res.">
        <title>The status, quality, and expansion of the NIH full-length cDNA project: the Mammalian Gene Collection (MGC).</title>
        <authorList>
            <consortium name="The MGC Project Team"/>
        </authorList>
    </citation>
    <scope>NUCLEOTIDE SEQUENCE [LARGE SCALE MRNA] (ISOFORM 2)</scope>
    <source>
        <tissue>Skin</tissue>
    </source>
</reference>
<reference key="5">
    <citation type="journal article" date="2000" name="DNA Res.">
        <title>Characterization of long cDNA clones from human adult spleen.</title>
        <authorList>
            <person name="Hattori A."/>
            <person name="Okumura K."/>
            <person name="Nagase T."/>
            <person name="Kikuno R."/>
            <person name="Hirosawa M."/>
            <person name="Ohara O."/>
        </authorList>
    </citation>
    <scope>NUCLEOTIDE SEQUENCE [LARGE SCALE MRNA] OF 37-677 (ISOFORM 1)</scope>
    <scope>VARIANT THR-577</scope>
    <source>
        <tissue>Spleen</tissue>
    </source>
</reference>
<reference key="6">
    <citation type="journal article" date="2002" name="Brain Res. Brain Res. Rev.">
        <title>The biology of the opioid growth factor receptor (OGFr).</title>
        <authorList>
            <person name="Zagon I.S."/>
            <person name="Verderame M.F."/>
            <person name="McLaughlin P.J."/>
        </authorList>
    </citation>
    <scope>REVIEW</scope>
</reference>
<reference key="7">
    <citation type="journal article" date="2006" name="Cell">
        <title>Global, in vivo, and site-specific phosphorylation dynamics in signaling networks.</title>
        <authorList>
            <person name="Olsen J.V."/>
            <person name="Blagoev B."/>
            <person name="Gnad F."/>
            <person name="Macek B."/>
            <person name="Kumar C."/>
            <person name="Mortensen P."/>
            <person name="Mann M."/>
        </authorList>
    </citation>
    <scope>PHOSPHORYLATION [LARGE SCALE ANALYSIS] AT SER-315</scope>
    <scope>IDENTIFICATION BY MASS SPECTROMETRY [LARGE SCALE ANALYSIS]</scope>
    <source>
        <tissue>Cervix carcinoma</tissue>
    </source>
</reference>
<reference key="8">
    <citation type="journal article" date="2006" name="Nat. Biotechnol.">
        <title>A probability-based approach for high-throughput protein phosphorylation analysis and site localization.</title>
        <authorList>
            <person name="Beausoleil S.A."/>
            <person name="Villen J."/>
            <person name="Gerber S.A."/>
            <person name="Rush J."/>
            <person name="Gygi S.P."/>
        </authorList>
    </citation>
    <scope>IDENTIFICATION BY MASS SPECTROMETRY [LARGE SCALE ANALYSIS]</scope>
    <source>
        <tissue>Cervix carcinoma</tissue>
    </source>
</reference>
<reference key="9">
    <citation type="journal article" date="2007" name="Science">
        <title>ATM and ATR substrate analysis reveals extensive protein networks responsive to DNA damage.</title>
        <authorList>
            <person name="Matsuoka S."/>
            <person name="Ballif B.A."/>
            <person name="Smogorzewska A."/>
            <person name="McDonald E.R. III"/>
            <person name="Hurov K.E."/>
            <person name="Luo J."/>
            <person name="Bakalarski C.E."/>
            <person name="Zhao Z."/>
            <person name="Solimini N."/>
            <person name="Lerenthal Y."/>
            <person name="Shiloh Y."/>
            <person name="Gygi S.P."/>
            <person name="Elledge S.J."/>
        </authorList>
    </citation>
    <scope>PHOSPHORYLATION [LARGE SCALE ANALYSIS] AT SER-420</scope>
    <scope>IDENTIFICATION BY MASS SPECTROMETRY [LARGE SCALE ANALYSIS]</scope>
    <source>
        <tissue>Embryonic kidney</tissue>
    </source>
</reference>
<reference key="10">
    <citation type="journal article" date="2008" name="Proc. Natl. Acad. Sci. U.S.A.">
        <title>A quantitative atlas of mitotic phosphorylation.</title>
        <authorList>
            <person name="Dephoure N."/>
            <person name="Zhou C."/>
            <person name="Villen J."/>
            <person name="Beausoleil S.A."/>
            <person name="Bakalarski C.E."/>
            <person name="Elledge S.J."/>
            <person name="Gygi S.P."/>
        </authorList>
    </citation>
    <scope>PHOSPHORYLATION [LARGE SCALE ANALYSIS] AT SER-484</scope>
    <scope>IDENTIFICATION BY MASS SPECTROMETRY [LARGE SCALE ANALYSIS]</scope>
    <source>
        <tissue>Cervix carcinoma</tissue>
    </source>
</reference>
<reference key="11">
    <citation type="journal article" date="2008" name="Proteomics">
        <title>Large-scale phosphoproteome analysis of human liver tissue by enrichment and fractionation of phosphopeptides with strong anion exchange chromatography.</title>
        <authorList>
            <person name="Han G."/>
            <person name="Ye M."/>
            <person name="Zhou H."/>
            <person name="Jiang X."/>
            <person name="Feng S."/>
            <person name="Jiang X."/>
            <person name="Tian R."/>
            <person name="Wan D."/>
            <person name="Zou H."/>
            <person name="Gu J."/>
        </authorList>
    </citation>
    <scope>PHOSPHORYLATION [LARGE SCALE ANALYSIS] AT SER-378</scope>
    <scope>IDENTIFICATION BY MASS SPECTROMETRY [LARGE SCALE ANALYSIS]</scope>
    <source>
        <tissue>Liver</tissue>
    </source>
</reference>
<reference key="12">
    <citation type="journal article" date="2009" name="Anal. Chem.">
        <title>Lys-N and trypsin cover complementary parts of the phosphoproteome in a refined SCX-based approach.</title>
        <authorList>
            <person name="Gauci S."/>
            <person name="Helbig A.O."/>
            <person name="Slijper M."/>
            <person name="Krijgsveld J."/>
            <person name="Heck A.J."/>
            <person name="Mohammed S."/>
        </authorList>
    </citation>
    <scope>ACETYLATION [LARGE SCALE ANALYSIS] AT MET-1</scope>
    <scope>IDENTIFICATION BY MASS SPECTROMETRY [LARGE SCALE ANALYSIS]</scope>
</reference>
<reference key="13">
    <citation type="journal article" date="2009" name="Mol. Cell. Proteomics">
        <title>Large-scale proteomics analysis of the human kinome.</title>
        <authorList>
            <person name="Oppermann F.S."/>
            <person name="Gnad F."/>
            <person name="Olsen J.V."/>
            <person name="Hornberger R."/>
            <person name="Greff Z."/>
            <person name="Keri G."/>
            <person name="Mann M."/>
            <person name="Daub H."/>
        </authorList>
    </citation>
    <scope>PHOSPHORYLATION [LARGE SCALE ANALYSIS] AT SER-378</scope>
    <scope>IDENTIFICATION BY MASS SPECTROMETRY [LARGE SCALE ANALYSIS]</scope>
</reference>
<reference key="14">
    <citation type="journal article" date="2009" name="Sci. Signal.">
        <title>Quantitative phosphoproteomic analysis of T cell receptor signaling reveals system-wide modulation of protein-protein interactions.</title>
        <authorList>
            <person name="Mayya V."/>
            <person name="Lundgren D.H."/>
            <person name="Hwang S.-I."/>
            <person name="Rezaul K."/>
            <person name="Wu L."/>
            <person name="Eng J.K."/>
            <person name="Rodionov V."/>
            <person name="Han D.K."/>
        </authorList>
    </citation>
    <scope>PHOSPHORYLATION [LARGE SCALE ANALYSIS] AT SER-378</scope>
    <scope>IDENTIFICATION BY MASS SPECTROMETRY [LARGE SCALE ANALYSIS]</scope>
    <source>
        <tissue>Leukemic T-cell</tissue>
    </source>
</reference>
<reference key="15">
    <citation type="journal article" date="2010" name="Sci. Signal.">
        <title>Quantitative phosphoproteomics reveals widespread full phosphorylation site occupancy during mitosis.</title>
        <authorList>
            <person name="Olsen J.V."/>
            <person name="Vermeulen M."/>
            <person name="Santamaria A."/>
            <person name="Kumar C."/>
            <person name="Miller M.L."/>
            <person name="Jensen L.J."/>
            <person name="Gnad F."/>
            <person name="Cox J."/>
            <person name="Jensen T.S."/>
            <person name="Nigg E.A."/>
            <person name="Brunak S."/>
            <person name="Mann M."/>
        </authorList>
    </citation>
    <scope>PHOSPHORYLATION [LARGE SCALE ANALYSIS] AT SER-315; SER-361; SER-378; SER-484; SER-537; SER-557 AND SER-617</scope>
    <scope>IDENTIFICATION BY MASS SPECTROMETRY [LARGE SCALE ANALYSIS]</scope>
    <source>
        <tissue>Cervix carcinoma</tissue>
    </source>
</reference>
<reference key="16">
    <citation type="journal article" date="2011" name="BMC Syst. Biol.">
        <title>Initial characterization of the human central proteome.</title>
        <authorList>
            <person name="Burkard T.R."/>
            <person name="Planyavsky M."/>
            <person name="Kaupe I."/>
            <person name="Breitwieser F.P."/>
            <person name="Buerckstuemmer T."/>
            <person name="Bennett K.L."/>
            <person name="Superti-Furga G."/>
            <person name="Colinge J."/>
        </authorList>
    </citation>
    <scope>IDENTIFICATION BY MASS SPECTROMETRY [LARGE SCALE ANALYSIS]</scope>
</reference>
<reference key="17">
    <citation type="journal article" date="2011" name="Sci. Signal.">
        <title>System-wide temporal characterization of the proteome and phosphoproteome of human embryonic stem cell differentiation.</title>
        <authorList>
            <person name="Rigbolt K.T."/>
            <person name="Prokhorova T.A."/>
            <person name="Akimov V."/>
            <person name="Henningsen J."/>
            <person name="Johansen P.T."/>
            <person name="Kratchmarova I."/>
            <person name="Kassem M."/>
            <person name="Mann M."/>
            <person name="Olsen J.V."/>
            <person name="Blagoev B."/>
        </authorList>
    </citation>
    <scope>PHOSPHORYLATION [LARGE SCALE ANALYSIS] AT SER-315 AND SER-378</scope>
    <scope>IDENTIFICATION BY MASS SPECTROMETRY [LARGE SCALE ANALYSIS]</scope>
</reference>
<reference key="18">
    <citation type="journal article" date="2013" name="J. Proteome Res.">
        <title>Toward a comprehensive characterization of a human cancer cell phosphoproteome.</title>
        <authorList>
            <person name="Zhou H."/>
            <person name="Di Palma S."/>
            <person name="Preisinger C."/>
            <person name="Peng M."/>
            <person name="Polat A.N."/>
            <person name="Heck A.J."/>
            <person name="Mohammed S."/>
        </authorList>
    </citation>
    <scope>PHOSPHORYLATION [LARGE SCALE ANALYSIS] AT SER-299; SER-315; SER-349; SER-361; SER-378; SER-382; SER-403 AND SER-484</scope>
    <scope>IDENTIFICATION BY MASS SPECTROMETRY [LARGE SCALE ANALYSIS]</scope>
    <source>
        <tissue>Cervix carcinoma</tissue>
        <tissue>Erythroleukemia</tissue>
    </source>
</reference>
<reference key="19">
    <citation type="journal article" date="2014" name="J. Proteomics">
        <title>An enzyme assisted RP-RPLC approach for in-depth analysis of human liver phosphoproteome.</title>
        <authorList>
            <person name="Bian Y."/>
            <person name="Song C."/>
            <person name="Cheng K."/>
            <person name="Dong M."/>
            <person name="Wang F."/>
            <person name="Huang J."/>
            <person name="Sun D."/>
            <person name="Wang L."/>
            <person name="Ye M."/>
            <person name="Zou H."/>
        </authorList>
    </citation>
    <scope>PHOSPHORYLATION [LARGE SCALE ANALYSIS] AT SER-315 AND SER-378</scope>
    <scope>IDENTIFICATION BY MASS SPECTROMETRY [LARGE SCALE ANALYSIS]</scope>
    <source>
        <tissue>Liver</tissue>
    </source>
</reference>
<proteinExistence type="evidence at protein level"/>
<gene>
    <name type="primary">OGFR</name>
</gene>
<keyword id="KW-0007">Acetylation</keyword>
<keyword id="KW-0025">Alternative splicing</keyword>
<keyword id="KW-0963">Cytoplasm</keyword>
<keyword id="KW-0341">Growth regulation</keyword>
<keyword id="KW-0539">Nucleus</keyword>
<keyword id="KW-0597">Phosphoprotein</keyword>
<keyword id="KW-1267">Proteomics identification</keyword>
<keyword id="KW-0675">Receptor</keyword>
<keyword id="KW-1185">Reference proteome</keyword>
<keyword id="KW-0677">Repeat</keyword>
<sequence length="677" mass="73325">MDDPDCDSTWEEDEEDAEDAEDEDCEDGEAAGARDADAGDEDEESEEPRAARPSSFQSRMTGSRNWRATRDMCRYRHNYPDLVERDCNGDTPNLSFYRNEIRFLPNGCFIEDILQNWTDNYDLLEDNHSYIQWLFPLREPGVNWHAKPLTLREVEVFKSSQEIQERLVRAYELMLGFYGIRLEDRGTGTVGRAQNYQKRFQNLNWRSHNNLRITRILKSLGELGLEHFQAPLVRFFLEETLVRRELPGVRQSALDYFMFAVRCRHQRRQLVHFAWEHFRPRCKFVWGPQDKLRRFKPSSLPHPLEGSRKVEEEGSPGDPDHEASTQGRTCGPEHSKGGGRVDEGPQPRSVEPQDAGPLERSQGDEAGGHGEDRPEPLSPKESKKRKLELSRREQPPTEPGPQSASEVEKIALNLEGCALSQGSLRTGTQEVGGQDPGEAVQPCRQPLGARVADKVRKRRKVDEGAGDSAAVASGGAQTLALAGSPAPSGHPKAGHSENGVEEDTEGRTGPKEGTPGSPSETPGPSPAGPAGDEPAESPSETPGPRPAGPAGDEPAESPSETPGPRPAGPAGDEPAESPSETPGPSPAGPTRDEPAESPSETPGPRPAGPAGDEPAESPSETPGPRPAGPAGDEPAESPSETPGPSPAGPTRDEPAKAGEAAELQDAEVESSAKSGKP</sequence>
<feature type="chain" id="PRO_0000058030" description="Opioid growth factor receptor">
    <location>
        <begin position="1"/>
        <end position="677"/>
    </location>
</feature>
<feature type="repeat" description="1">
    <location>
        <begin position="517"/>
        <end position="536"/>
    </location>
</feature>
<feature type="repeat" description="2">
    <location>
        <begin position="537"/>
        <end position="556"/>
    </location>
</feature>
<feature type="repeat" description="3">
    <location>
        <begin position="557"/>
        <end position="576"/>
    </location>
</feature>
<feature type="repeat" description="4">
    <location>
        <begin position="577"/>
        <end position="596"/>
    </location>
</feature>
<feature type="repeat" description="5">
    <location>
        <begin position="597"/>
        <end position="616"/>
    </location>
</feature>
<feature type="repeat" description="6">
    <location>
        <begin position="617"/>
        <end position="636"/>
    </location>
</feature>
<feature type="repeat" description="7">
    <location>
        <begin position="637"/>
        <end position="656"/>
    </location>
</feature>
<feature type="region of interest" description="Disordered" evidence="4">
    <location>
        <begin position="1"/>
        <end position="63"/>
    </location>
</feature>
<feature type="region of interest" description="Disordered" evidence="4">
    <location>
        <begin position="295"/>
        <end position="407"/>
    </location>
</feature>
<feature type="region of interest" description="Disordered" evidence="4">
    <location>
        <begin position="421"/>
        <end position="677"/>
    </location>
</feature>
<feature type="region of interest" description="7 X 20 AA approximate tandem repeats of [ST]-P-S-E-T-P-G-P-[SR]-P-A-G-P-[AT]-[GR]-D-E-P-A-[EK]">
    <location>
        <begin position="517"/>
        <end position="656"/>
    </location>
</feature>
<feature type="short sequence motif" description="Bipartite nuclear localization signal" evidence="3">
    <location>
        <begin position="267"/>
        <end position="283"/>
    </location>
</feature>
<feature type="compositionally biased region" description="Acidic residues" evidence="4">
    <location>
        <begin position="1"/>
        <end position="29"/>
    </location>
</feature>
<feature type="compositionally biased region" description="Polar residues" evidence="4">
    <location>
        <begin position="54"/>
        <end position="63"/>
    </location>
</feature>
<feature type="compositionally biased region" description="Basic and acidic residues" evidence="4">
    <location>
        <begin position="305"/>
        <end position="323"/>
    </location>
</feature>
<feature type="compositionally biased region" description="Basic and acidic residues" evidence="4">
    <location>
        <begin position="331"/>
        <end position="345"/>
    </location>
</feature>
<feature type="compositionally biased region" description="Basic and acidic residues" evidence="4">
    <location>
        <begin position="361"/>
        <end position="395"/>
    </location>
</feature>
<feature type="compositionally biased region" description="Polar residues" evidence="4">
    <location>
        <begin position="421"/>
        <end position="431"/>
    </location>
</feature>
<feature type="compositionally biased region" description="Low complexity" evidence="4">
    <location>
        <begin position="466"/>
        <end position="476"/>
    </location>
</feature>
<feature type="compositionally biased region" description="Low complexity" evidence="4">
    <location>
        <begin position="528"/>
        <end position="538"/>
    </location>
</feature>
<feature type="modified residue" description="N-acetylmethionine" evidence="16">
    <location>
        <position position="1"/>
    </location>
</feature>
<feature type="modified residue" description="Phosphoserine" evidence="20">
    <location>
        <position position="299"/>
    </location>
</feature>
<feature type="modified residue" description="Phosphoserine" evidence="11 18 19 20 21">
    <location>
        <position position="315"/>
    </location>
</feature>
<feature type="modified residue" description="Phosphoserine" evidence="20">
    <location>
        <position position="349"/>
    </location>
</feature>
<feature type="modified residue" description="Phosphoserine" evidence="18 20">
    <location>
        <position position="361"/>
    </location>
</feature>
<feature type="modified residue" description="Phosphoserine" evidence="13 15 17 18 19 20 21">
    <location>
        <position position="378"/>
    </location>
</feature>
<feature type="modified residue" description="Phosphoserine" evidence="20">
    <location>
        <position position="382"/>
    </location>
</feature>
<feature type="modified residue" description="Phosphoserine" evidence="20">
    <location>
        <position position="403"/>
    </location>
</feature>
<feature type="modified residue" description="Phosphoserine" evidence="12">
    <location>
        <position position="420"/>
    </location>
</feature>
<feature type="modified residue" description="Phosphoserine" evidence="14 18 20">
    <location>
        <position position="484"/>
    </location>
</feature>
<feature type="modified residue" description="Phosphoserine" evidence="18">
    <location>
        <position position="537"/>
    </location>
</feature>
<feature type="modified residue" description="Phosphoserine" evidence="18">
    <location>
        <position position="557"/>
    </location>
</feature>
<feature type="modified residue" description="Phosphoserine" evidence="18">
    <location>
        <position position="617"/>
    </location>
</feature>
<feature type="modified residue" description="Phosphoserine" evidence="2">
    <location>
        <position position="637"/>
    </location>
</feature>
<feature type="splice variant" id="VSP_004060" description="In isoform 2." evidence="8 9">
    <location>
        <begin position="558"/>
        <end position="577"/>
    </location>
</feature>
<feature type="sequence variant" id="VAR_059706" description="In dbSNP:rs6122313.">
    <original>R</original>
    <variation>S</variation>
    <location>
        <position position="545"/>
    </location>
</feature>
<feature type="sequence variant" id="VAR_030011" description="In dbSNP:rs6122315." evidence="5 6 7">
    <original>S</original>
    <variation>T</variation>
    <location>
        <position position="577"/>
    </location>
</feature>
<feature type="sequence conflict" description="In Ref. 2." evidence="10" ref="2">
    <original>DG</original>
    <variation>EA</variation>
    <location>
        <begin position="27"/>
        <end position="28"/>
    </location>
</feature>
<feature type="sequence conflict" description="In Ref. 5." evidence="10" ref="5">
    <original>DAGDEDEESEEPRAARPSSFQSRMTGSRNWRATRDMCRYRHNYP</original>
    <variation>GARRALGVLGQPGGLQMRLPERHGGPQGSLCLMDPCCPLSLALQ</variation>
    <location>
        <begin position="37"/>
        <end position="80"/>
    </location>
</feature>
<feature type="sequence conflict" description="In Ref. 2." evidence="10" ref="2">
    <original>AAR</original>
    <variation>GPE</variation>
    <location>
        <begin position="50"/>
        <end position="52"/>
    </location>
</feature>
<feature type="sequence conflict" description="In Ref. 2." evidence="10" ref="2">
    <original>E</original>
    <variation>A</variation>
    <location>
        <position position="172"/>
    </location>
</feature>
<feature type="sequence conflict" description="In Ref. 1; AAF64404/AAF64405." evidence="10" ref="1">
    <original>LG</original>
    <variation>PC</variation>
    <location>
        <begin position="220"/>
        <end position="221"/>
    </location>
</feature>
<feature type="sequence conflict" description="In Ref. 1; AAF64404/AAF64405/AAF64406." evidence="10" ref="1">
    <original>G</original>
    <variation>S</variation>
    <location>
        <position position="224"/>
    </location>
</feature>
<feature type="sequence conflict" description="In Ref. 2; AAD03745/AAD03737." evidence="10" ref="2">
    <original>T</original>
    <variation>S</variation>
    <location>
        <position position="240"/>
    </location>
</feature>
<feature type="sequence conflict" description="In Ref. 2; AAD03745/AAD03737." evidence="10" ref="2">
    <original>R</original>
    <variation>G</variation>
    <location>
        <position position="262"/>
    </location>
</feature>
<feature type="sequence conflict" description="In Ref. 1; AAF64406." evidence="10" ref="1">
    <original>G</original>
    <variation>E</variation>
    <location>
        <position position="331"/>
    </location>
</feature>
<feature type="sequence conflict" description="In Ref. 1; AAF64406." evidence="10" ref="1">
    <original>E</original>
    <variation>G</variation>
    <location>
        <position position="398"/>
    </location>
</feature>
<feature type="sequence conflict" description="In Ref. 1; AAF64406." evidence="10" ref="1">
    <original>A</original>
    <variation>T</variation>
    <location>
        <position position="465"/>
    </location>
</feature>
<feature type="sequence conflict" description="In Ref. 1; AAF64405." evidence="10" ref="1">
    <original>A</original>
    <variation>AKTPSETPGPSPAGPTRDEPA</variation>
    <location>
        <position position="535"/>
    </location>
</feature>
<feature type="sequence conflict" description="In Ref. 1; AAF64404." evidence="10" ref="1">
    <original>P</original>
    <variation>L</variation>
    <location>
        <position position="564"/>
    </location>
</feature>
<feature type="sequence conflict" description="In Ref. 1; AAF64406, 2 and 5; BAB15775." evidence="10" ref="1 2 5">
    <original>E</original>
    <variation>K</variation>
    <location>
        <position position="576"/>
    </location>
</feature>
<feature type="sequence conflict" description="In Ref. 1; AAF64406." evidence="10" ref="1">
    <original>S</original>
    <variation>I</variation>
    <location>
        <position position="577"/>
    </location>
</feature>
<organism>
    <name type="scientific">Homo sapiens</name>
    <name type="common">Human</name>
    <dbReference type="NCBI Taxonomy" id="9606"/>
    <lineage>
        <taxon>Eukaryota</taxon>
        <taxon>Metazoa</taxon>
        <taxon>Chordata</taxon>
        <taxon>Craniata</taxon>
        <taxon>Vertebrata</taxon>
        <taxon>Euteleostomi</taxon>
        <taxon>Mammalia</taxon>
        <taxon>Eutheria</taxon>
        <taxon>Euarchontoglires</taxon>
        <taxon>Primates</taxon>
        <taxon>Haplorrhini</taxon>
        <taxon>Catarrhini</taxon>
        <taxon>Hominidae</taxon>
        <taxon>Homo</taxon>
    </lineage>
</organism>